<gene>
    <name type="primary">l(1)G0004</name>
    <name type="ORF">CG11738</name>
</gene>
<sequence length="240" mass="26677">MEAENIRADAFEPAKRATKRGASGGGQQDVEMQVDEATGIEGQVLGSSRASAPPKAKRARSELRKVSVPPHRYSSLKEHWMKIFTPVVEHMKLQIRFNMKARQVELRVGPETPDIANLQRGADFVRAFLCGFEVDDALALLRLEDLFVESFEIKDVKTLRGDHQSRAIGRLAGKGGRTKFTIENVTKTRIVLADSKIHILGSYQNIQLARRAVCNLILGSPPSKVYGNLRAVASRLSERM</sequence>
<comment type="subcellular location">
    <subcellularLocation>
        <location evidence="1">Nucleus</location>
        <location evidence="1">Nucleolus</location>
    </subcellularLocation>
</comment>
<comment type="similarity">
    <text evidence="3">Belongs to the PNO1 family.</text>
</comment>
<name>PNO1_DROME</name>
<feature type="chain" id="PRO_0000270550" description="RNA-binding protein pno1">
    <location>
        <begin position="1"/>
        <end position="240"/>
    </location>
</feature>
<feature type="domain" description="KH">
    <location>
        <begin position="164"/>
        <end position="213"/>
    </location>
</feature>
<feature type="region of interest" description="Disordered" evidence="2">
    <location>
        <begin position="1"/>
        <end position="61"/>
    </location>
</feature>
<feature type="compositionally biased region" description="Basic and acidic residues" evidence="2">
    <location>
        <begin position="1"/>
        <end position="15"/>
    </location>
</feature>
<proteinExistence type="evidence at transcript level"/>
<organism>
    <name type="scientific">Drosophila melanogaster</name>
    <name type="common">Fruit fly</name>
    <dbReference type="NCBI Taxonomy" id="7227"/>
    <lineage>
        <taxon>Eukaryota</taxon>
        <taxon>Metazoa</taxon>
        <taxon>Ecdysozoa</taxon>
        <taxon>Arthropoda</taxon>
        <taxon>Hexapoda</taxon>
        <taxon>Insecta</taxon>
        <taxon>Pterygota</taxon>
        <taxon>Neoptera</taxon>
        <taxon>Endopterygota</taxon>
        <taxon>Diptera</taxon>
        <taxon>Brachycera</taxon>
        <taxon>Muscomorpha</taxon>
        <taxon>Ephydroidea</taxon>
        <taxon>Drosophilidae</taxon>
        <taxon>Drosophila</taxon>
        <taxon>Sophophora</taxon>
    </lineage>
</organism>
<dbReference type="EMBL" id="AF188892">
    <property type="protein sequence ID" value="AAG17061.1"/>
    <property type="molecule type" value="Genomic_DNA"/>
</dbReference>
<dbReference type="EMBL" id="AE014298">
    <property type="protein sequence ID" value="AAF50915.1"/>
    <property type="molecule type" value="Genomic_DNA"/>
</dbReference>
<dbReference type="EMBL" id="AY061304">
    <property type="protein sequence ID" value="AAL28852.1"/>
    <property type="molecule type" value="mRNA"/>
</dbReference>
<dbReference type="RefSeq" id="NP_608387.1">
    <property type="nucleotide sequence ID" value="NM_134543.3"/>
</dbReference>
<dbReference type="SMR" id="Q9VR89"/>
<dbReference type="BioGRID" id="59324">
    <property type="interactions" value="11"/>
</dbReference>
<dbReference type="FunCoup" id="Q9VR89">
    <property type="interactions" value="1313"/>
</dbReference>
<dbReference type="IntAct" id="Q9VR89">
    <property type="interactions" value="4"/>
</dbReference>
<dbReference type="STRING" id="7227.FBpp0076990"/>
<dbReference type="PaxDb" id="7227-FBpp0076990"/>
<dbReference type="DNASU" id="33033"/>
<dbReference type="EnsemblMetazoa" id="FBtr0077298">
    <property type="protein sequence ID" value="FBpp0076990"/>
    <property type="gene ID" value="FBgn0027334"/>
</dbReference>
<dbReference type="GeneID" id="33033"/>
<dbReference type="KEGG" id="dme:Dmel_CG11738"/>
<dbReference type="AGR" id="FB:FBgn0027334"/>
<dbReference type="FlyBase" id="FBgn0027334">
    <property type="gene designation" value="l(1)G0004"/>
</dbReference>
<dbReference type="VEuPathDB" id="VectorBase:FBgn0027334"/>
<dbReference type="eggNOG" id="KOG3273">
    <property type="taxonomic scope" value="Eukaryota"/>
</dbReference>
<dbReference type="GeneTree" id="ENSGT00390000018052"/>
<dbReference type="HOGENOM" id="CLU_064992_2_0_1"/>
<dbReference type="InParanoid" id="Q9VR89"/>
<dbReference type="OMA" id="TPLRNNW"/>
<dbReference type="OrthoDB" id="1932641at2759"/>
<dbReference type="PhylomeDB" id="Q9VR89"/>
<dbReference type="BioGRID-ORCS" id="33033">
    <property type="hits" value="0 hits in 1 CRISPR screen"/>
</dbReference>
<dbReference type="GenomeRNAi" id="33033"/>
<dbReference type="PRO" id="PR:Q9VR89"/>
<dbReference type="Proteomes" id="UP000000803">
    <property type="component" value="Chromosome X"/>
</dbReference>
<dbReference type="Bgee" id="FBgn0027334">
    <property type="expression patterns" value="Expressed in adult middle midgut class II enteroendocrine cell in adult midgut (Drosophila) and 126 other cell types or tissues"/>
</dbReference>
<dbReference type="GO" id="GO:0005730">
    <property type="term" value="C:nucleolus"/>
    <property type="evidence" value="ECO:0000250"/>
    <property type="project" value="UniProtKB"/>
</dbReference>
<dbReference type="GO" id="GO:0005634">
    <property type="term" value="C:nucleus"/>
    <property type="evidence" value="ECO:0000318"/>
    <property type="project" value="GO_Central"/>
</dbReference>
<dbReference type="GO" id="GO:0003723">
    <property type="term" value="F:RNA binding"/>
    <property type="evidence" value="ECO:0007669"/>
    <property type="project" value="UniProtKB-KW"/>
</dbReference>
<dbReference type="CDD" id="cd22391">
    <property type="entry name" value="KH-I_PNO1_rpt1"/>
    <property type="match status" value="1"/>
</dbReference>
<dbReference type="CDD" id="cd22392">
    <property type="entry name" value="KH-I_PNO1_rpt2"/>
    <property type="match status" value="1"/>
</dbReference>
<dbReference type="FunFam" id="3.30.1370.10:FF:000009">
    <property type="entry name" value="RNA-binding protein PNO1"/>
    <property type="match status" value="1"/>
</dbReference>
<dbReference type="Gene3D" id="3.30.1370.10">
    <property type="entry name" value="K Homology domain, type 1"/>
    <property type="match status" value="1"/>
</dbReference>
<dbReference type="InterPro" id="IPR055212">
    <property type="entry name" value="KH-I_PNO1_first"/>
</dbReference>
<dbReference type="InterPro" id="IPR004087">
    <property type="entry name" value="KH_dom"/>
</dbReference>
<dbReference type="InterPro" id="IPR036612">
    <property type="entry name" value="KH_dom_type_1_sf"/>
</dbReference>
<dbReference type="InterPro" id="IPR055211">
    <property type="entry name" value="KH_PNO1_2nd"/>
</dbReference>
<dbReference type="PANTHER" id="PTHR12826">
    <property type="entry name" value="RIBONUCLEASE Y"/>
    <property type="match status" value="1"/>
</dbReference>
<dbReference type="PANTHER" id="PTHR12826:SF13">
    <property type="entry name" value="RNA-BINDING PROTEIN PNO1"/>
    <property type="match status" value="1"/>
</dbReference>
<dbReference type="Pfam" id="PF22891">
    <property type="entry name" value="KH_PNO1_2nd"/>
    <property type="match status" value="1"/>
</dbReference>
<dbReference type="SMART" id="SM00322">
    <property type="entry name" value="KH"/>
    <property type="match status" value="1"/>
</dbReference>
<dbReference type="SUPFAM" id="SSF54791">
    <property type="entry name" value="Eukaryotic type KH-domain (KH-domain type I)"/>
    <property type="match status" value="1"/>
</dbReference>
<accession>Q9VR89</accession>
<reference key="1">
    <citation type="submission" date="1999-09" db="EMBL/GenBank/DDBJ databases">
        <title>A potential RNA binding protein is necessary for male fertility.</title>
        <authorList>
            <person name="Cordes R."/>
            <person name="Schaefer U."/>
            <person name="Schaefer M.A."/>
        </authorList>
    </citation>
    <scope>NUCLEOTIDE SEQUENCE [GENOMIC DNA]</scope>
    <source>
        <strain>Oregon-R</strain>
    </source>
</reference>
<reference key="2">
    <citation type="journal article" date="2000" name="Science">
        <title>The genome sequence of Drosophila melanogaster.</title>
        <authorList>
            <person name="Adams M.D."/>
            <person name="Celniker S.E."/>
            <person name="Holt R.A."/>
            <person name="Evans C.A."/>
            <person name="Gocayne J.D."/>
            <person name="Amanatides P.G."/>
            <person name="Scherer S.E."/>
            <person name="Li P.W."/>
            <person name="Hoskins R.A."/>
            <person name="Galle R.F."/>
            <person name="George R.A."/>
            <person name="Lewis S.E."/>
            <person name="Richards S."/>
            <person name="Ashburner M."/>
            <person name="Henderson S.N."/>
            <person name="Sutton G.G."/>
            <person name="Wortman J.R."/>
            <person name="Yandell M.D."/>
            <person name="Zhang Q."/>
            <person name="Chen L.X."/>
            <person name="Brandon R.C."/>
            <person name="Rogers Y.-H.C."/>
            <person name="Blazej R.G."/>
            <person name="Champe M."/>
            <person name="Pfeiffer B.D."/>
            <person name="Wan K.H."/>
            <person name="Doyle C."/>
            <person name="Baxter E.G."/>
            <person name="Helt G."/>
            <person name="Nelson C.R."/>
            <person name="Miklos G.L.G."/>
            <person name="Abril J.F."/>
            <person name="Agbayani A."/>
            <person name="An H.-J."/>
            <person name="Andrews-Pfannkoch C."/>
            <person name="Baldwin D."/>
            <person name="Ballew R.M."/>
            <person name="Basu A."/>
            <person name="Baxendale J."/>
            <person name="Bayraktaroglu L."/>
            <person name="Beasley E.M."/>
            <person name="Beeson K.Y."/>
            <person name="Benos P.V."/>
            <person name="Berman B.P."/>
            <person name="Bhandari D."/>
            <person name="Bolshakov S."/>
            <person name="Borkova D."/>
            <person name="Botchan M.R."/>
            <person name="Bouck J."/>
            <person name="Brokstein P."/>
            <person name="Brottier P."/>
            <person name="Burtis K.C."/>
            <person name="Busam D.A."/>
            <person name="Butler H."/>
            <person name="Cadieu E."/>
            <person name="Center A."/>
            <person name="Chandra I."/>
            <person name="Cherry J.M."/>
            <person name="Cawley S."/>
            <person name="Dahlke C."/>
            <person name="Davenport L.B."/>
            <person name="Davies P."/>
            <person name="de Pablos B."/>
            <person name="Delcher A."/>
            <person name="Deng Z."/>
            <person name="Mays A.D."/>
            <person name="Dew I."/>
            <person name="Dietz S.M."/>
            <person name="Dodson K."/>
            <person name="Doup L.E."/>
            <person name="Downes M."/>
            <person name="Dugan-Rocha S."/>
            <person name="Dunkov B.C."/>
            <person name="Dunn P."/>
            <person name="Durbin K.J."/>
            <person name="Evangelista C.C."/>
            <person name="Ferraz C."/>
            <person name="Ferriera S."/>
            <person name="Fleischmann W."/>
            <person name="Fosler C."/>
            <person name="Gabrielian A.E."/>
            <person name="Garg N.S."/>
            <person name="Gelbart W.M."/>
            <person name="Glasser K."/>
            <person name="Glodek A."/>
            <person name="Gong F."/>
            <person name="Gorrell J.H."/>
            <person name="Gu Z."/>
            <person name="Guan P."/>
            <person name="Harris M."/>
            <person name="Harris N.L."/>
            <person name="Harvey D.A."/>
            <person name="Heiman T.J."/>
            <person name="Hernandez J.R."/>
            <person name="Houck J."/>
            <person name="Hostin D."/>
            <person name="Houston K.A."/>
            <person name="Howland T.J."/>
            <person name="Wei M.-H."/>
            <person name="Ibegwam C."/>
            <person name="Jalali M."/>
            <person name="Kalush F."/>
            <person name="Karpen G.H."/>
            <person name="Ke Z."/>
            <person name="Kennison J.A."/>
            <person name="Ketchum K.A."/>
            <person name="Kimmel B.E."/>
            <person name="Kodira C.D."/>
            <person name="Kraft C.L."/>
            <person name="Kravitz S."/>
            <person name="Kulp D."/>
            <person name="Lai Z."/>
            <person name="Lasko P."/>
            <person name="Lei Y."/>
            <person name="Levitsky A.A."/>
            <person name="Li J.H."/>
            <person name="Li Z."/>
            <person name="Liang Y."/>
            <person name="Lin X."/>
            <person name="Liu X."/>
            <person name="Mattei B."/>
            <person name="McIntosh T.C."/>
            <person name="McLeod M.P."/>
            <person name="McPherson D."/>
            <person name="Merkulov G."/>
            <person name="Milshina N.V."/>
            <person name="Mobarry C."/>
            <person name="Morris J."/>
            <person name="Moshrefi A."/>
            <person name="Mount S.M."/>
            <person name="Moy M."/>
            <person name="Murphy B."/>
            <person name="Murphy L."/>
            <person name="Muzny D.M."/>
            <person name="Nelson D.L."/>
            <person name="Nelson D.R."/>
            <person name="Nelson K.A."/>
            <person name="Nixon K."/>
            <person name="Nusskern D.R."/>
            <person name="Pacleb J.M."/>
            <person name="Palazzolo M."/>
            <person name="Pittman G.S."/>
            <person name="Pan S."/>
            <person name="Pollard J."/>
            <person name="Puri V."/>
            <person name="Reese M.G."/>
            <person name="Reinert K."/>
            <person name="Remington K."/>
            <person name="Saunders R.D.C."/>
            <person name="Scheeler F."/>
            <person name="Shen H."/>
            <person name="Shue B.C."/>
            <person name="Siden-Kiamos I."/>
            <person name="Simpson M."/>
            <person name="Skupski M.P."/>
            <person name="Smith T.J."/>
            <person name="Spier E."/>
            <person name="Spradling A.C."/>
            <person name="Stapleton M."/>
            <person name="Strong R."/>
            <person name="Sun E."/>
            <person name="Svirskas R."/>
            <person name="Tector C."/>
            <person name="Turner R."/>
            <person name="Venter E."/>
            <person name="Wang A.H."/>
            <person name="Wang X."/>
            <person name="Wang Z.-Y."/>
            <person name="Wassarman D.A."/>
            <person name="Weinstock G.M."/>
            <person name="Weissenbach J."/>
            <person name="Williams S.M."/>
            <person name="Woodage T."/>
            <person name="Worley K.C."/>
            <person name="Wu D."/>
            <person name="Yang S."/>
            <person name="Yao Q.A."/>
            <person name="Ye J."/>
            <person name="Yeh R.-F."/>
            <person name="Zaveri J.S."/>
            <person name="Zhan M."/>
            <person name="Zhang G."/>
            <person name="Zhao Q."/>
            <person name="Zheng L."/>
            <person name="Zheng X.H."/>
            <person name="Zhong F.N."/>
            <person name="Zhong W."/>
            <person name="Zhou X."/>
            <person name="Zhu S.C."/>
            <person name="Zhu X."/>
            <person name="Smith H.O."/>
            <person name="Gibbs R.A."/>
            <person name="Myers E.W."/>
            <person name="Rubin G.M."/>
            <person name="Venter J.C."/>
        </authorList>
    </citation>
    <scope>NUCLEOTIDE SEQUENCE [LARGE SCALE GENOMIC DNA]</scope>
    <source>
        <strain>Berkeley</strain>
    </source>
</reference>
<reference key="3">
    <citation type="journal article" date="2002" name="Genome Biol.">
        <title>Annotation of the Drosophila melanogaster euchromatic genome: a systematic review.</title>
        <authorList>
            <person name="Misra S."/>
            <person name="Crosby M.A."/>
            <person name="Mungall C.J."/>
            <person name="Matthews B.B."/>
            <person name="Campbell K.S."/>
            <person name="Hradecky P."/>
            <person name="Huang Y."/>
            <person name="Kaminker J.S."/>
            <person name="Millburn G.H."/>
            <person name="Prochnik S.E."/>
            <person name="Smith C.D."/>
            <person name="Tupy J.L."/>
            <person name="Whitfield E.J."/>
            <person name="Bayraktaroglu L."/>
            <person name="Berman B.P."/>
            <person name="Bettencourt B.R."/>
            <person name="Celniker S.E."/>
            <person name="de Grey A.D.N.J."/>
            <person name="Drysdale R.A."/>
            <person name="Harris N.L."/>
            <person name="Richter J."/>
            <person name="Russo S."/>
            <person name="Schroeder A.J."/>
            <person name="Shu S.Q."/>
            <person name="Stapleton M."/>
            <person name="Yamada C."/>
            <person name="Ashburner M."/>
            <person name="Gelbart W.M."/>
            <person name="Rubin G.M."/>
            <person name="Lewis S.E."/>
        </authorList>
    </citation>
    <scope>GENOME REANNOTATION</scope>
    <source>
        <strain>Berkeley</strain>
    </source>
</reference>
<reference key="4">
    <citation type="journal article" date="2002" name="Genome Biol.">
        <title>A Drosophila full-length cDNA resource.</title>
        <authorList>
            <person name="Stapleton M."/>
            <person name="Carlson J.W."/>
            <person name="Brokstein P."/>
            <person name="Yu C."/>
            <person name="Champe M."/>
            <person name="George R.A."/>
            <person name="Guarin H."/>
            <person name="Kronmiller B."/>
            <person name="Pacleb J.M."/>
            <person name="Park S."/>
            <person name="Wan K.H."/>
            <person name="Rubin G.M."/>
            <person name="Celniker S.E."/>
        </authorList>
    </citation>
    <scope>NUCLEOTIDE SEQUENCE [LARGE SCALE MRNA]</scope>
    <source>
        <strain>Berkeley</strain>
        <tissue>Embryo</tissue>
    </source>
</reference>
<keyword id="KW-0539">Nucleus</keyword>
<keyword id="KW-1185">Reference proteome</keyword>
<keyword id="KW-0694">RNA-binding</keyword>
<protein>
    <recommendedName>
        <fullName>RNA-binding protein pno1</fullName>
    </recommendedName>
</protein>
<evidence type="ECO:0000250" key="1"/>
<evidence type="ECO:0000256" key="2">
    <source>
        <dbReference type="SAM" id="MobiDB-lite"/>
    </source>
</evidence>
<evidence type="ECO:0000305" key="3"/>